<proteinExistence type="inferred from homology"/>
<feature type="chain" id="PRO_0000175554" description="Flavin-dependent thymidylate synthase">
    <location>
        <begin position="1"/>
        <end position="207"/>
    </location>
</feature>
<feature type="domain" description="ThyX" evidence="2">
    <location>
        <begin position="1"/>
        <end position="204"/>
    </location>
</feature>
<feature type="short sequence motif" description="ThyX motif" evidence="1">
    <location>
        <begin position="74"/>
        <end position="84"/>
    </location>
</feature>
<feature type="active site" description="Involved in ionization of N3 of dUMP, leading to its activation" evidence="1">
    <location>
        <position position="170"/>
    </location>
</feature>
<feature type="binding site" evidence="1">
    <location>
        <position position="50"/>
    </location>
    <ligand>
        <name>FAD</name>
        <dbReference type="ChEBI" id="CHEBI:57692"/>
        <note>ligand shared between neighboring subunits</note>
    </ligand>
</feature>
<feature type="binding site" evidence="1">
    <location>
        <begin position="71"/>
        <end position="74"/>
    </location>
    <ligand>
        <name>dUMP</name>
        <dbReference type="ChEBI" id="CHEBI:246422"/>
        <note>ligand shared between dimeric partners</note>
    </ligand>
</feature>
<feature type="binding site" evidence="1">
    <location>
        <begin position="74"/>
        <end position="76"/>
    </location>
    <ligand>
        <name>FAD</name>
        <dbReference type="ChEBI" id="CHEBI:57692"/>
        <note>ligand shared between neighboring subunits</note>
    </ligand>
</feature>
<feature type="binding site" description="in other chain" evidence="1">
    <location>
        <begin position="84"/>
        <end position="86"/>
    </location>
    <ligand>
        <name>dUMP</name>
        <dbReference type="ChEBI" id="CHEBI:246422"/>
        <note>ligand shared between dimeric partners</note>
    </ligand>
</feature>
<feature type="binding site" description="in other chain" evidence="1">
    <location>
        <position position="143"/>
    </location>
    <ligand>
        <name>dUMP</name>
        <dbReference type="ChEBI" id="CHEBI:246422"/>
        <note>ligand shared between dimeric partners</note>
    </ligand>
</feature>
<feature type="binding site" evidence="1">
    <location>
        <begin position="159"/>
        <end position="161"/>
    </location>
    <ligand>
        <name>FAD</name>
        <dbReference type="ChEBI" id="CHEBI:57692"/>
        <note>ligand shared between neighboring subunits</note>
    </ligand>
</feature>
<feature type="binding site" evidence="1">
    <location>
        <position position="165"/>
    </location>
    <ligand>
        <name>FAD</name>
        <dbReference type="ChEBI" id="CHEBI:57692"/>
        <note>ligand shared between neighboring subunits</note>
    </ligand>
</feature>
<feature type="binding site" evidence="1">
    <location>
        <position position="170"/>
    </location>
    <ligand>
        <name>dUMP</name>
        <dbReference type="ChEBI" id="CHEBI:246422"/>
        <note>ligand shared between dimeric partners</note>
    </ligand>
</feature>
<protein>
    <recommendedName>
        <fullName evidence="1">Flavin-dependent thymidylate synthase</fullName>
        <shortName evidence="1">FDTS</shortName>
        <ecNumber evidence="1">2.1.1.148</ecNumber>
    </recommendedName>
    <alternativeName>
        <fullName evidence="1">FAD-dependent thymidylate synthase</fullName>
    </alternativeName>
    <alternativeName>
        <fullName evidence="1">Thymidylate synthase ThyX</fullName>
        <shortName evidence="1">TS</shortName>
        <shortName evidence="1">TSase</shortName>
    </alternativeName>
</protein>
<evidence type="ECO:0000255" key="1">
    <source>
        <dbReference type="HAMAP-Rule" id="MF_01408"/>
    </source>
</evidence>
<evidence type="ECO:0000255" key="2">
    <source>
        <dbReference type="PROSITE-ProRule" id="PRU00661"/>
    </source>
</evidence>
<name>THYX_CAMJE</name>
<sequence length="207" mass="23809">MQITLLFHTPLSVCSHATRTCWQSFEKGDCGGEKDKELIDRVGNKFKHASTLEHLNYTFYIQGISRACLQEVARHRHTSPSVKSTRYTLKELRNEAEFKIGDFENASRYLVLCGNEEVDNASIKALENLRTILQKSISLDIAKYCLPESYKTELTLTINARSLQNFISLRSSKSALWEIRNLANALFEALPQEHKFIFEHCLHKDIE</sequence>
<comment type="function">
    <text evidence="1">Catalyzes the reductive methylation of 2'-deoxyuridine-5'-monophosphate (dUMP) to 2'-deoxythymidine-5'-monophosphate (dTMP) while utilizing 5,10-methylenetetrahydrofolate (mTHF) as the methyl donor, and NADPH and FADH(2) as the reductant.</text>
</comment>
<comment type="catalytic activity">
    <reaction evidence="1">
        <text>dUMP + (6R)-5,10-methylene-5,6,7,8-tetrahydrofolate + NADPH + H(+) = dTMP + (6S)-5,6,7,8-tetrahydrofolate + NADP(+)</text>
        <dbReference type="Rhea" id="RHEA:29043"/>
        <dbReference type="ChEBI" id="CHEBI:15378"/>
        <dbReference type="ChEBI" id="CHEBI:15636"/>
        <dbReference type="ChEBI" id="CHEBI:57453"/>
        <dbReference type="ChEBI" id="CHEBI:57783"/>
        <dbReference type="ChEBI" id="CHEBI:58349"/>
        <dbReference type="ChEBI" id="CHEBI:63528"/>
        <dbReference type="ChEBI" id="CHEBI:246422"/>
        <dbReference type="EC" id="2.1.1.148"/>
    </reaction>
</comment>
<comment type="cofactor">
    <cofactor evidence="1">
        <name>FAD</name>
        <dbReference type="ChEBI" id="CHEBI:57692"/>
    </cofactor>
    <text evidence="1">Binds 4 FAD per tetramer. Each FAD binding site is formed by three monomers.</text>
</comment>
<comment type="pathway">
    <text evidence="1">Pyrimidine metabolism; dTTP biosynthesis.</text>
</comment>
<comment type="subunit">
    <text evidence="1">Homotetramer.</text>
</comment>
<comment type="similarity">
    <text evidence="1">Belongs to the thymidylate synthase ThyX family.</text>
</comment>
<reference key="1">
    <citation type="journal article" date="2000" name="Nature">
        <title>The genome sequence of the food-borne pathogen Campylobacter jejuni reveals hypervariable sequences.</title>
        <authorList>
            <person name="Parkhill J."/>
            <person name="Wren B.W."/>
            <person name="Mungall K.L."/>
            <person name="Ketley J.M."/>
            <person name="Churcher C.M."/>
            <person name="Basham D."/>
            <person name="Chillingworth T."/>
            <person name="Davies R.M."/>
            <person name="Feltwell T."/>
            <person name="Holroyd S."/>
            <person name="Jagels K."/>
            <person name="Karlyshev A.V."/>
            <person name="Moule S."/>
            <person name="Pallen M.J."/>
            <person name="Penn C.W."/>
            <person name="Quail M.A."/>
            <person name="Rajandream M.A."/>
            <person name="Rutherford K.M."/>
            <person name="van Vliet A.H.M."/>
            <person name="Whitehead S."/>
            <person name="Barrell B.G."/>
        </authorList>
    </citation>
    <scope>NUCLEOTIDE SEQUENCE [LARGE SCALE GENOMIC DNA]</scope>
    <source>
        <strain>ATCC 700819 / NCTC 11168</strain>
    </source>
</reference>
<organism>
    <name type="scientific">Campylobacter jejuni subsp. jejuni serotype O:2 (strain ATCC 700819 / NCTC 11168)</name>
    <dbReference type="NCBI Taxonomy" id="192222"/>
    <lineage>
        <taxon>Bacteria</taxon>
        <taxon>Pseudomonadati</taxon>
        <taxon>Campylobacterota</taxon>
        <taxon>Epsilonproteobacteria</taxon>
        <taxon>Campylobacterales</taxon>
        <taxon>Campylobacteraceae</taxon>
        <taxon>Campylobacter</taxon>
    </lineage>
</organism>
<keyword id="KW-0274">FAD</keyword>
<keyword id="KW-0285">Flavoprotein</keyword>
<keyword id="KW-0489">Methyltransferase</keyword>
<keyword id="KW-0521">NADP</keyword>
<keyword id="KW-0545">Nucleotide biosynthesis</keyword>
<keyword id="KW-1185">Reference proteome</keyword>
<keyword id="KW-0808">Transferase</keyword>
<dbReference type="EC" id="2.1.1.148" evidence="1"/>
<dbReference type="EMBL" id="AL111168">
    <property type="protein sequence ID" value="CAL34207.1"/>
    <property type="molecule type" value="Genomic_DNA"/>
</dbReference>
<dbReference type="PIR" id="E81418">
    <property type="entry name" value="E81418"/>
</dbReference>
<dbReference type="RefSeq" id="WP_002853111.1">
    <property type="nucleotide sequence ID" value="NZ_SZUC01000002.1"/>
</dbReference>
<dbReference type="RefSeq" id="YP_002343498.1">
    <property type="nucleotide sequence ID" value="NC_002163.1"/>
</dbReference>
<dbReference type="SMR" id="Q9PJ85"/>
<dbReference type="IntAct" id="Q9PJ85">
    <property type="interactions" value="74"/>
</dbReference>
<dbReference type="STRING" id="192222.Cj0026c"/>
<dbReference type="PaxDb" id="192222-Cj0026c"/>
<dbReference type="EnsemblBacteria" id="CAL34207">
    <property type="protein sequence ID" value="CAL34207"/>
    <property type="gene ID" value="Cj0026c"/>
</dbReference>
<dbReference type="GeneID" id="904365"/>
<dbReference type="KEGG" id="cje:Cj0026c"/>
<dbReference type="PATRIC" id="fig|192222.6.peg.26"/>
<dbReference type="eggNOG" id="COG1351">
    <property type="taxonomic scope" value="Bacteria"/>
</dbReference>
<dbReference type="HOGENOM" id="CLU_077585_2_0_7"/>
<dbReference type="OrthoDB" id="9780625at2"/>
<dbReference type="UniPathway" id="UPA00575"/>
<dbReference type="Proteomes" id="UP000000799">
    <property type="component" value="Chromosome"/>
</dbReference>
<dbReference type="GO" id="GO:0050660">
    <property type="term" value="F:flavin adenine dinucleotide binding"/>
    <property type="evidence" value="ECO:0007669"/>
    <property type="project" value="InterPro"/>
</dbReference>
<dbReference type="GO" id="GO:0070402">
    <property type="term" value="F:NADPH binding"/>
    <property type="evidence" value="ECO:0007669"/>
    <property type="project" value="TreeGrafter"/>
</dbReference>
<dbReference type="GO" id="GO:0050797">
    <property type="term" value="F:thymidylate synthase (FAD) activity"/>
    <property type="evidence" value="ECO:0007669"/>
    <property type="project" value="UniProtKB-UniRule"/>
</dbReference>
<dbReference type="GO" id="GO:0004799">
    <property type="term" value="F:thymidylate synthase activity"/>
    <property type="evidence" value="ECO:0007669"/>
    <property type="project" value="TreeGrafter"/>
</dbReference>
<dbReference type="GO" id="GO:0006231">
    <property type="term" value="P:dTMP biosynthetic process"/>
    <property type="evidence" value="ECO:0007669"/>
    <property type="project" value="UniProtKB-UniRule"/>
</dbReference>
<dbReference type="GO" id="GO:0006235">
    <property type="term" value="P:dTTP biosynthetic process"/>
    <property type="evidence" value="ECO:0007669"/>
    <property type="project" value="UniProtKB-UniRule"/>
</dbReference>
<dbReference type="GO" id="GO:0032259">
    <property type="term" value="P:methylation"/>
    <property type="evidence" value="ECO:0007669"/>
    <property type="project" value="UniProtKB-KW"/>
</dbReference>
<dbReference type="CDD" id="cd20175">
    <property type="entry name" value="ThyX"/>
    <property type="match status" value="1"/>
</dbReference>
<dbReference type="Gene3D" id="3.30.1360.170">
    <property type="match status" value="1"/>
</dbReference>
<dbReference type="HAMAP" id="MF_01408">
    <property type="entry name" value="ThyX"/>
    <property type="match status" value="1"/>
</dbReference>
<dbReference type="InterPro" id="IPR003669">
    <property type="entry name" value="Thymidylate_synthase_ThyX"/>
</dbReference>
<dbReference type="InterPro" id="IPR036098">
    <property type="entry name" value="Thymidylate_synthase_ThyX_sf"/>
</dbReference>
<dbReference type="NCBIfam" id="TIGR02170">
    <property type="entry name" value="thyX"/>
    <property type="match status" value="1"/>
</dbReference>
<dbReference type="PANTHER" id="PTHR34934">
    <property type="entry name" value="FLAVIN-DEPENDENT THYMIDYLATE SYNTHASE"/>
    <property type="match status" value="1"/>
</dbReference>
<dbReference type="PANTHER" id="PTHR34934:SF1">
    <property type="entry name" value="FLAVIN-DEPENDENT THYMIDYLATE SYNTHASE"/>
    <property type="match status" value="1"/>
</dbReference>
<dbReference type="Pfam" id="PF02511">
    <property type="entry name" value="Thy1"/>
    <property type="match status" value="1"/>
</dbReference>
<dbReference type="SUPFAM" id="SSF69796">
    <property type="entry name" value="Thymidylate synthase-complementing protein Thy1"/>
    <property type="match status" value="1"/>
</dbReference>
<dbReference type="PROSITE" id="PS51331">
    <property type="entry name" value="THYX"/>
    <property type="match status" value="1"/>
</dbReference>
<accession>Q9PJ85</accession>
<accession>Q0PC99</accession>
<gene>
    <name evidence="1" type="primary">thyX</name>
    <name type="ordered locus">Cj0026c</name>
</gene>